<keyword id="KW-1185">Reference proteome</keyword>
<keyword id="KW-0687">Ribonucleoprotein</keyword>
<keyword id="KW-0689">Ribosomal protein</keyword>
<keyword id="KW-0694">RNA-binding</keyword>
<keyword id="KW-0699">rRNA-binding</keyword>
<feature type="chain" id="PRO_1000140715" description="Small ribosomal subunit protein uS4">
    <location>
        <begin position="1"/>
        <end position="202"/>
    </location>
</feature>
<feature type="domain" description="S4 RNA-binding" evidence="1">
    <location>
        <begin position="90"/>
        <end position="152"/>
    </location>
</feature>
<feature type="region of interest" description="Disordered" evidence="2">
    <location>
        <begin position="22"/>
        <end position="43"/>
    </location>
</feature>
<name>RS4_GLOC7</name>
<accession>B7KK85</accession>
<protein>
    <recommendedName>
        <fullName evidence="1">Small ribosomal subunit protein uS4</fullName>
    </recommendedName>
    <alternativeName>
        <fullName evidence="3">30S ribosomal protein S4</fullName>
    </alternativeName>
</protein>
<organism>
    <name type="scientific">Gloeothece citriformis (strain PCC 7424)</name>
    <name type="common">Cyanothece sp. (strain PCC 7424)</name>
    <dbReference type="NCBI Taxonomy" id="65393"/>
    <lineage>
        <taxon>Bacteria</taxon>
        <taxon>Bacillati</taxon>
        <taxon>Cyanobacteriota</taxon>
        <taxon>Cyanophyceae</taxon>
        <taxon>Oscillatoriophycideae</taxon>
        <taxon>Chroococcales</taxon>
        <taxon>Aphanothecaceae</taxon>
        <taxon>Gloeothece</taxon>
        <taxon>Gloeothece citriformis</taxon>
    </lineage>
</organism>
<dbReference type="EMBL" id="CP001291">
    <property type="protein sequence ID" value="ACK70970.1"/>
    <property type="molecule type" value="Genomic_DNA"/>
</dbReference>
<dbReference type="RefSeq" id="WP_015954573.1">
    <property type="nucleotide sequence ID" value="NC_011729.1"/>
</dbReference>
<dbReference type="SMR" id="B7KK85"/>
<dbReference type="STRING" id="65393.PCC7424_2554"/>
<dbReference type="KEGG" id="cyc:PCC7424_2554"/>
<dbReference type="eggNOG" id="COG0522">
    <property type="taxonomic scope" value="Bacteria"/>
</dbReference>
<dbReference type="HOGENOM" id="CLU_092403_0_5_3"/>
<dbReference type="OrthoDB" id="9803672at2"/>
<dbReference type="Proteomes" id="UP000002384">
    <property type="component" value="Chromosome"/>
</dbReference>
<dbReference type="GO" id="GO:0015935">
    <property type="term" value="C:small ribosomal subunit"/>
    <property type="evidence" value="ECO:0007669"/>
    <property type="project" value="InterPro"/>
</dbReference>
<dbReference type="GO" id="GO:0019843">
    <property type="term" value="F:rRNA binding"/>
    <property type="evidence" value="ECO:0007669"/>
    <property type="project" value="UniProtKB-UniRule"/>
</dbReference>
<dbReference type="GO" id="GO:0003735">
    <property type="term" value="F:structural constituent of ribosome"/>
    <property type="evidence" value="ECO:0007669"/>
    <property type="project" value="InterPro"/>
</dbReference>
<dbReference type="GO" id="GO:0042274">
    <property type="term" value="P:ribosomal small subunit biogenesis"/>
    <property type="evidence" value="ECO:0007669"/>
    <property type="project" value="TreeGrafter"/>
</dbReference>
<dbReference type="GO" id="GO:0006412">
    <property type="term" value="P:translation"/>
    <property type="evidence" value="ECO:0007669"/>
    <property type="project" value="UniProtKB-UniRule"/>
</dbReference>
<dbReference type="CDD" id="cd00165">
    <property type="entry name" value="S4"/>
    <property type="match status" value="1"/>
</dbReference>
<dbReference type="FunFam" id="3.10.290.10:FF:000001">
    <property type="entry name" value="30S ribosomal protein S4"/>
    <property type="match status" value="1"/>
</dbReference>
<dbReference type="FunFam" id="1.10.1050.10:FF:000002">
    <property type="entry name" value="30S ribosomal protein S4, chloroplastic"/>
    <property type="match status" value="1"/>
</dbReference>
<dbReference type="Gene3D" id="1.10.1050.10">
    <property type="entry name" value="Ribosomal Protein S4 Delta 41, Chain A, domain 1"/>
    <property type="match status" value="1"/>
</dbReference>
<dbReference type="Gene3D" id="3.10.290.10">
    <property type="entry name" value="RNA-binding S4 domain"/>
    <property type="match status" value="1"/>
</dbReference>
<dbReference type="HAMAP" id="MF_01306_B">
    <property type="entry name" value="Ribosomal_uS4_B"/>
    <property type="match status" value="1"/>
</dbReference>
<dbReference type="InterPro" id="IPR022801">
    <property type="entry name" value="Ribosomal_uS4"/>
</dbReference>
<dbReference type="InterPro" id="IPR005709">
    <property type="entry name" value="Ribosomal_uS4_bac-type"/>
</dbReference>
<dbReference type="InterPro" id="IPR018079">
    <property type="entry name" value="Ribosomal_uS4_CS"/>
</dbReference>
<dbReference type="InterPro" id="IPR001912">
    <property type="entry name" value="Ribosomal_uS4_N"/>
</dbReference>
<dbReference type="InterPro" id="IPR002942">
    <property type="entry name" value="S4_RNA-bd"/>
</dbReference>
<dbReference type="InterPro" id="IPR036986">
    <property type="entry name" value="S4_RNA-bd_sf"/>
</dbReference>
<dbReference type="NCBIfam" id="NF003717">
    <property type="entry name" value="PRK05327.1"/>
    <property type="match status" value="1"/>
</dbReference>
<dbReference type="NCBIfam" id="TIGR01017">
    <property type="entry name" value="rpsD_bact"/>
    <property type="match status" value="1"/>
</dbReference>
<dbReference type="PANTHER" id="PTHR11831">
    <property type="entry name" value="30S 40S RIBOSOMAL PROTEIN"/>
    <property type="match status" value="1"/>
</dbReference>
<dbReference type="PANTHER" id="PTHR11831:SF4">
    <property type="entry name" value="SMALL RIBOSOMAL SUBUNIT PROTEIN US4M"/>
    <property type="match status" value="1"/>
</dbReference>
<dbReference type="Pfam" id="PF00163">
    <property type="entry name" value="Ribosomal_S4"/>
    <property type="match status" value="1"/>
</dbReference>
<dbReference type="Pfam" id="PF01479">
    <property type="entry name" value="S4"/>
    <property type="match status" value="1"/>
</dbReference>
<dbReference type="SMART" id="SM01390">
    <property type="entry name" value="Ribosomal_S4"/>
    <property type="match status" value="1"/>
</dbReference>
<dbReference type="SMART" id="SM00363">
    <property type="entry name" value="S4"/>
    <property type="match status" value="1"/>
</dbReference>
<dbReference type="SUPFAM" id="SSF55174">
    <property type="entry name" value="Alpha-L RNA-binding motif"/>
    <property type="match status" value="1"/>
</dbReference>
<dbReference type="PROSITE" id="PS00632">
    <property type="entry name" value="RIBOSOMAL_S4"/>
    <property type="match status" value="1"/>
</dbReference>
<dbReference type="PROSITE" id="PS50889">
    <property type="entry name" value="S4"/>
    <property type="match status" value="1"/>
</dbReference>
<proteinExistence type="inferred from homology"/>
<evidence type="ECO:0000255" key="1">
    <source>
        <dbReference type="HAMAP-Rule" id="MF_01306"/>
    </source>
</evidence>
<evidence type="ECO:0000256" key="2">
    <source>
        <dbReference type="SAM" id="MobiDB-lite"/>
    </source>
</evidence>
<evidence type="ECO:0000305" key="3"/>
<reference key="1">
    <citation type="journal article" date="2011" name="MBio">
        <title>Novel metabolic attributes of the genus Cyanothece, comprising a group of unicellular nitrogen-fixing Cyanobacteria.</title>
        <authorList>
            <person name="Bandyopadhyay A."/>
            <person name="Elvitigala T."/>
            <person name="Welsh E."/>
            <person name="Stockel J."/>
            <person name="Liberton M."/>
            <person name="Min H."/>
            <person name="Sherman L.A."/>
            <person name="Pakrasi H.B."/>
        </authorList>
    </citation>
    <scope>NUCLEOTIDE SEQUENCE [LARGE SCALE GENOMIC DNA]</scope>
    <source>
        <strain>PCC 7424</strain>
    </source>
</reference>
<gene>
    <name evidence="1" type="primary">rpsD</name>
    <name evidence="1" type="synonym">rps4</name>
    <name type="ordered locus">PCC7424_2554</name>
</gene>
<comment type="function">
    <text evidence="1">One of the primary rRNA binding proteins, it binds directly to 16S rRNA where it nucleates assembly of the body of the 30S subunit.</text>
</comment>
<comment type="function">
    <text evidence="1">With S5 and S12 plays an important role in translational accuracy.</text>
</comment>
<comment type="subunit">
    <text evidence="1">Part of the 30S ribosomal subunit. Contacts protein S5. The interaction surface between S4 and S5 is involved in control of translational fidelity.</text>
</comment>
<comment type="similarity">
    <text evidence="1">Belongs to the universal ribosomal protein uS4 family.</text>
</comment>
<sequence length="202" mass="23345">MARYRGPRLRVVRRLGELPGLTRKNARRAYPPGQHGQNRRKRSEYAIRLEEKQKLRFNYGVSEKQLIRYVRRARRATGSTGQTLLQLLEMRLDNTVFRLGMAGTIPAARQLVNHGHILVNDRVVDIASYQCRPGDVIKVRDQDKSRKLVQANMEYPGLANLPSHLEFDKNTLIGKVNGVIEREWIALNINELLVVEYYSRQA</sequence>